<evidence type="ECO:0000255" key="1">
    <source>
        <dbReference type="HAMAP-Rule" id="MF_01590"/>
    </source>
</evidence>
<sequence>MINFSSFYKDIADSNLQHWLETLPAILGKWQRDHKHGNLPKWEKVLNKLHYPQPDNIDFSSSVTIGTGEQLSPGQVEKLTNLLEVFQPWRKGPFSVHGIQIDTEWRSDWKWDRVKNFISPLKNRTVLDVGCGSGYHMWRMLGDGATRVVGIDPSPLFLCQFEAIKRVAGNQHPVYLLPLGIEELPPLDAFDTVFSMGVLYHRRSPIDHLLQLRDQLRVGGELVLETLVIDGDENAVLVPQDRYGKMNNVWFIPSVAALMLWLKKCEFIDIRCVDIDITSLAEQRSTHWMKNESLVDYLDPNDVSLTVEGYPAPKRAIIIATKNQPNHDLV</sequence>
<gene>
    <name evidence="1" type="primary">cmoB</name>
    <name type="ordered locus">Sfri_2187</name>
</gene>
<organism>
    <name type="scientific">Shewanella frigidimarina (strain NCIMB 400)</name>
    <dbReference type="NCBI Taxonomy" id="318167"/>
    <lineage>
        <taxon>Bacteria</taxon>
        <taxon>Pseudomonadati</taxon>
        <taxon>Pseudomonadota</taxon>
        <taxon>Gammaproteobacteria</taxon>
        <taxon>Alteromonadales</taxon>
        <taxon>Shewanellaceae</taxon>
        <taxon>Shewanella</taxon>
    </lineage>
</organism>
<accession>Q081N2</accession>
<name>CMOB_SHEFN</name>
<comment type="function">
    <text evidence="1">Catalyzes carboxymethyl transfer from carboxy-S-adenosyl-L-methionine (Cx-SAM) to 5-hydroxyuridine (ho5U) to form 5-carboxymethoxyuridine (cmo5U) at position 34 in tRNAs.</text>
</comment>
<comment type="catalytic activity">
    <reaction evidence="1">
        <text>carboxy-S-adenosyl-L-methionine + 5-hydroxyuridine(34) in tRNA = 5-carboxymethoxyuridine(34) in tRNA + S-adenosyl-L-homocysteine + H(+)</text>
        <dbReference type="Rhea" id="RHEA:52848"/>
        <dbReference type="Rhea" id="RHEA-COMP:13381"/>
        <dbReference type="Rhea" id="RHEA-COMP:13383"/>
        <dbReference type="ChEBI" id="CHEBI:15378"/>
        <dbReference type="ChEBI" id="CHEBI:57856"/>
        <dbReference type="ChEBI" id="CHEBI:134278"/>
        <dbReference type="ChEBI" id="CHEBI:136877"/>
        <dbReference type="ChEBI" id="CHEBI:136879"/>
    </reaction>
</comment>
<comment type="subunit">
    <text evidence="1">Homotetramer.</text>
</comment>
<comment type="similarity">
    <text evidence="1">Belongs to the class I-like SAM-binding methyltransferase superfamily. CmoB family.</text>
</comment>
<dbReference type="EC" id="2.5.1.-" evidence="1"/>
<dbReference type="EMBL" id="CP000447">
    <property type="protein sequence ID" value="ABI72033.1"/>
    <property type="molecule type" value="Genomic_DNA"/>
</dbReference>
<dbReference type="RefSeq" id="WP_011637643.1">
    <property type="nucleotide sequence ID" value="NC_008345.1"/>
</dbReference>
<dbReference type="SMR" id="Q081N2"/>
<dbReference type="STRING" id="318167.Sfri_2187"/>
<dbReference type="KEGG" id="sfr:Sfri_2187"/>
<dbReference type="eggNOG" id="COG0500">
    <property type="taxonomic scope" value="Bacteria"/>
</dbReference>
<dbReference type="HOGENOM" id="CLU_052665_0_0_6"/>
<dbReference type="OrthoDB" id="9773188at2"/>
<dbReference type="Proteomes" id="UP000000684">
    <property type="component" value="Chromosome"/>
</dbReference>
<dbReference type="GO" id="GO:0008168">
    <property type="term" value="F:methyltransferase activity"/>
    <property type="evidence" value="ECO:0007669"/>
    <property type="project" value="TreeGrafter"/>
</dbReference>
<dbReference type="GO" id="GO:0016765">
    <property type="term" value="F:transferase activity, transferring alkyl or aryl (other than methyl) groups"/>
    <property type="evidence" value="ECO:0007669"/>
    <property type="project" value="UniProtKB-UniRule"/>
</dbReference>
<dbReference type="GO" id="GO:0002098">
    <property type="term" value="P:tRNA wobble uridine modification"/>
    <property type="evidence" value="ECO:0007669"/>
    <property type="project" value="InterPro"/>
</dbReference>
<dbReference type="CDD" id="cd02440">
    <property type="entry name" value="AdoMet_MTases"/>
    <property type="match status" value="1"/>
</dbReference>
<dbReference type="Gene3D" id="3.40.50.150">
    <property type="entry name" value="Vaccinia Virus protein VP39"/>
    <property type="match status" value="1"/>
</dbReference>
<dbReference type="HAMAP" id="MF_01590">
    <property type="entry name" value="tRNA_carboxymethyltr_CmoB"/>
    <property type="match status" value="1"/>
</dbReference>
<dbReference type="InterPro" id="IPR010017">
    <property type="entry name" value="CmoB"/>
</dbReference>
<dbReference type="InterPro" id="IPR027555">
    <property type="entry name" value="Mo5U34_MeTrfas-like"/>
</dbReference>
<dbReference type="InterPro" id="IPR029063">
    <property type="entry name" value="SAM-dependent_MTases_sf"/>
</dbReference>
<dbReference type="NCBIfam" id="NF011650">
    <property type="entry name" value="PRK15068.1"/>
    <property type="match status" value="1"/>
</dbReference>
<dbReference type="NCBIfam" id="TIGR00452">
    <property type="entry name" value="tRNA 5-methoxyuridine(34)/uridine 5-oxyacetic acid(34) synthase CmoB"/>
    <property type="match status" value="1"/>
</dbReference>
<dbReference type="PANTHER" id="PTHR43464">
    <property type="entry name" value="METHYLTRANSFERASE"/>
    <property type="match status" value="1"/>
</dbReference>
<dbReference type="PANTHER" id="PTHR43464:SF95">
    <property type="entry name" value="TRNA U34 CARBOXYMETHYLTRANSFERASE"/>
    <property type="match status" value="1"/>
</dbReference>
<dbReference type="Pfam" id="PF08003">
    <property type="entry name" value="Methyltransf_9"/>
    <property type="match status" value="1"/>
</dbReference>
<dbReference type="SUPFAM" id="SSF53335">
    <property type="entry name" value="S-adenosyl-L-methionine-dependent methyltransferases"/>
    <property type="match status" value="1"/>
</dbReference>
<protein>
    <recommendedName>
        <fullName evidence="1">tRNA U34 carboxymethyltransferase</fullName>
        <ecNumber evidence="1">2.5.1.-</ecNumber>
    </recommendedName>
</protein>
<feature type="chain" id="PRO_0000313967" description="tRNA U34 carboxymethyltransferase">
    <location>
        <begin position="1"/>
        <end position="330"/>
    </location>
</feature>
<feature type="binding site" evidence="1">
    <location>
        <position position="91"/>
    </location>
    <ligand>
        <name>carboxy-S-adenosyl-L-methionine</name>
        <dbReference type="ChEBI" id="CHEBI:134278"/>
    </ligand>
</feature>
<feature type="binding site" evidence="1">
    <location>
        <position position="105"/>
    </location>
    <ligand>
        <name>carboxy-S-adenosyl-L-methionine</name>
        <dbReference type="ChEBI" id="CHEBI:134278"/>
    </ligand>
</feature>
<feature type="binding site" evidence="1">
    <location>
        <position position="110"/>
    </location>
    <ligand>
        <name>carboxy-S-adenosyl-L-methionine</name>
        <dbReference type="ChEBI" id="CHEBI:134278"/>
    </ligand>
</feature>
<feature type="binding site" evidence="1">
    <location>
        <position position="130"/>
    </location>
    <ligand>
        <name>carboxy-S-adenosyl-L-methionine</name>
        <dbReference type="ChEBI" id="CHEBI:134278"/>
    </ligand>
</feature>
<feature type="binding site" evidence="1">
    <location>
        <begin position="152"/>
        <end position="154"/>
    </location>
    <ligand>
        <name>carboxy-S-adenosyl-L-methionine</name>
        <dbReference type="ChEBI" id="CHEBI:134278"/>
    </ligand>
</feature>
<feature type="binding site" evidence="1">
    <location>
        <begin position="181"/>
        <end position="182"/>
    </location>
    <ligand>
        <name>carboxy-S-adenosyl-L-methionine</name>
        <dbReference type="ChEBI" id="CHEBI:134278"/>
    </ligand>
</feature>
<feature type="binding site" evidence="1">
    <location>
        <position position="196"/>
    </location>
    <ligand>
        <name>carboxy-S-adenosyl-L-methionine</name>
        <dbReference type="ChEBI" id="CHEBI:134278"/>
    </ligand>
</feature>
<feature type="binding site" evidence="1">
    <location>
        <position position="200"/>
    </location>
    <ligand>
        <name>carboxy-S-adenosyl-L-methionine</name>
        <dbReference type="ChEBI" id="CHEBI:134278"/>
    </ligand>
</feature>
<feature type="binding site" evidence="1">
    <location>
        <position position="315"/>
    </location>
    <ligand>
        <name>carboxy-S-adenosyl-L-methionine</name>
        <dbReference type="ChEBI" id="CHEBI:134278"/>
    </ligand>
</feature>
<proteinExistence type="inferred from homology"/>
<reference key="1">
    <citation type="submission" date="2006-08" db="EMBL/GenBank/DDBJ databases">
        <title>Complete sequence of Shewanella frigidimarina NCIMB 400.</title>
        <authorList>
            <consortium name="US DOE Joint Genome Institute"/>
            <person name="Copeland A."/>
            <person name="Lucas S."/>
            <person name="Lapidus A."/>
            <person name="Barry K."/>
            <person name="Detter J.C."/>
            <person name="Glavina del Rio T."/>
            <person name="Hammon N."/>
            <person name="Israni S."/>
            <person name="Dalin E."/>
            <person name="Tice H."/>
            <person name="Pitluck S."/>
            <person name="Fredrickson J.K."/>
            <person name="Kolker E."/>
            <person name="McCuel L.A."/>
            <person name="DiChristina T."/>
            <person name="Nealson K.H."/>
            <person name="Newman D."/>
            <person name="Tiedje J.M."/>
            <person name="Zhou J."/>
            <person name="Romine M.F."/>
            <person name="Culley D.E."/>
            <person name="Serres M."/>
            <person name="Chertkov O."/>
            <person name="Brettin T."/>
            <person name="Bruce D."/>
            <person name="Han C."/>
            <person name="Tapia R."/>
            <person name="Gilna P."/>
            <person name="Schmutz J."/>
            <person name="Larimer F."/>
            <person name="Land M."/>
            <person name="Hauser L."/>
            <person name="Kyrpides N."/>
            <person name="Mikhailova N."/>
            <person name="Richardson P."/>
        </authorList>
    </citation>
    <scope>NUCLEOTIDE SEQUENCE [LARGE SCALE GENOMIC DNA]</scope>
    <source>
        <strain>NCIMB 400</strain>
    </source>
</reference>
<keyword id="KW-1185">Reference proteome</keyword>
<keyword id="KW-0808">Transferase</keyword>
<keyword id="KW-0819">tRNA processing</keyword>